<protein>
    <recommendedName>
        <fullName>Taste receptor type 2 member 43</fullName>
        <shortName>T2R43</shortName>
    </recommendedName>
</protein>
<gene>
    <name type="primary">TAS2R43</name>
</gene>
<accession>Q646B4</accession>
<keyword id="KW-1003">Cell membrane</keyword>
<keyword id="KW-0966">Cell projection</keyword>
<keyword id="KW-0969">Cilium</keyword>
<keyword id="KW-0297">G-protein coupled receptor</keyword>
<keyword id="KW-0325">Glycoprotein</keyword>
<keyword id="KW-0472">Membrane</keyword>
<keyword id="KW-0675">Receptor</keyword>
<keyword id="KW-1185">Reference proteome</keyword>
<keyword id="KW-0716">Sensory transduction</keyword>
<keyword id="KW-0919">Taste</keyword>
<keyword id="KW-0807">Transducer</keyword>
<keyword id="KW-0812">Transmembrane</keyword>
<keyword id="KW-1133">Transmembrane helix</keyword>
<sequence>MITFLPIIFSSLVVVTFVIGNFANGFIALVNSIEWFKRQKISFADQILTALAVSRVGLLWVLLLNWYSTVLNPAFNSVEVRTTAYNIWAVINHFSNWLATSLSIFYLLKIANFSNFIFLHLKRRVKSVILVMLLGPLLFLACHLFVINMNEIVRTKEFEGNMTWKIKLKSAMYFSNMTVTMVANLVPFTLTLLSFLLLICSLCKHLKKMQLHGKGSQDPSTKVHIKVLQTVISFLLLCAIYFLSIMISVWSFGSLKNKPVFMFCKAMRFSYPSIHPFILIWGNKKLKQTFLSVFWQMRYWVKGEKTSSP</sequence>
<reference key="1">
    <citation type="journal article" date="2005" name="Mol. Biol. Evol.">
        <title>Evolution of bitter taste receptors in humans and apes.</title>
        <authorList>
            <person name="Fischer A."/>
            <person name="Gilad Y."/>
            <person name="Man O."/>
            <person name="Paeaebo S."/>
        </authorList>
    </citation>
    <scope>NUCLEOTIDE SEQUENCE [GENOMIC DNA]</scope>
</reference>
<name>T2R43_PANTR</name>
<dbReference type="EMBL" id="AY724889">
    <property type="protein sequence ID" value="AAU21105.1"/>
    <property type="molecule type" value="Genomic_DNA"/>
</dbReference>
<dbReference type="SMR" id="Q646B4"/>
<dbReference type="STRING" id="9598.ENSPTRP00000075231"/>
<dbReference type="GlyCosmos" id="Q646B4">
    <property type="glycosylation" value="2 sites, No reported glycans"/>
</dbReference>
<dbReference type="PaxDb" id="9598-ENSPTRP00000054709"/>
<dbReference type="eggNOG" id="ENOG502TE6U">
    <property type="taxonomic scope" value="Eukaryota"/>
</dbReference>
<dbReference type="InParanoid" id="Q646B4"/>
<dbReference type="Proteomes" id="UP000002277">
    <property type="component" value="Unplaced"/>
</dbReference>
<dbReference type="GO" id="GO:0060170">
    <property type="term" value="C:ciliary membrane"/>
    <property type="evidence" value="ECO:0007669"/>
    <property type="project" value="UniProtKB-SubCell"/>
</dbReference>
<dbReference type="GO" id="GO:0016020">
    <property type="term" value="C:membrane"/>
    <property type="evidence" value="ECO:0000318"/>
    <property type="project" value="GO_Central"/>
</dbReference>
<dbReference type="GO" id="GO:0031514">
    <property type="term" value="C:motile cilium"/>
    <property type="evidence" value="ECO:0000250"/>
    <property type="project" value="UniProtKB"/>
</dbReference>
<dbReference type="GO" id="GO:0033038">
    <property type="term" value="F:bitter taste receptor activity"/>
    <property type="evidence" value="ECO:0000318"/>
    <property type="project" value="GO_Central"/>
</dbReference>
<dbReference type="GO" id="GO:0004930">
    <property type="term" value="F:G protein-coupled receptor activity"/>
    <property type="evidence" value="ECO:0007669"/>
    <property type="project" value="UniProtKB-KW"/>
</dbReference>
<dbReference type="GO" id="GO:0001580">
    <property type="term" value="P:detection of chemical stimulus involved in sensory perception of bitter taste"/>
    <property type="evidence" value="ECO:0000318"/>
    <property type="project" value="GO_Central"/>
</dbReference>
<dbReference type="CDD" id="cd15027">
    <property type="entry name" value="7tm_TAS2R43-like"/>
    <property type="match status" value="1"/>
</dbReference>
<dbReference type="FunFam" id="1.20.1070.10:FF:000042">
    <property type="entry name" value="Taste receptor type 2 member 7"/>
    <property type="match status" value="1"/>
</dbReference>
<dbReference type="Gene3D" id="1.20.1070.10">
    <property type="entry name" value="Rhodopsin 7-helix transmembrane proteins"/>
    <property type="match status" value="1"/>
</dbReference>
<dbReference type="InterPro" id="IPR007960">
    <property type="entry name" value="TAS2R"/>
</dbReference>
<dbReference type="PANTHER" id="PTHR11394">
    <property type="entry name" value="TASTE RECEPTOR TYPE 2"/>
    <property type="match status" value="1"/>
</dbReference>
<dbReference type="PANTHER" id="PTHR11394:SF127">
    <property type="entry name" value="TASTE RECEPTOR TYPE 2 MEMBER 43"/>
    <property type="match status" value="1"/>
</dbReference>
<dbReference type="Pfam" id="PF05296">
    <property type="entry name" value="TAS2R"/>
    <property type="match status" value="1"/>
</dbReference>
<dbReference type="SUPFAM" id="SSF81321">
    <property type="entry name" value="Family A G protein-coupled receptor-like"/>
    <property type="match status" value="1"/>
</dbReference>
<proteinExistence type="inferred from homology"/>
<organism>
    <name type="scientific">Pan troglodytes</name>
    <name type="common">Chimpanzee</name>
    <dbReference type="NCBI Taxonomy" id="9598"/>
    <lineage>
        <taxon>Eukaryota</taxon>
        <taxon>Metazoa</taxon>
        <taxon>Chordata</taxon>
        <taxon>Craniata</taxon>
        <taxon>Vertebrata</taxon>
        <taxon>Euteleostomi</taxon>
        <taxon>Mammalia</taxon>
        <taxon>Eutheria</taxon>
        <taxon>Euarchontoglires</taxon>
        <taxon>Primates</taxon>
        <taxon>Haplorrhini</taxon>
        <taxon>Catarrhini</taxon>
        <taxon>Hominidae</taxon>
        <taxon>Pan</taxon>
    </lineage>
</organism>
<evidence type="ECO:0000250" key="1"/>
<evidence type="ECO:0000255" key="2"/>
<evidence type="ECO:0000305" key="3"/>
<comment type="function">
    <text evidence="1">Gustducin-coupled receptor immplicated in the perception of bitter compounds in the oral cavity and the gastrointestinal tract. Signals through PLCB2 and the calcium-regulated cation channel TRPM5. Activated by the sulfonyl amide sweeteners saccharin and acesulfame K. In airway epithelial cells, binding of bitter compounds increases the intracellular calcium ion concentration and stimulates ciliary beat frequency. May act as chemosensory receptors in airway epithelial cells to detect and eliminate potential noxious agents from the airways (By similarity).</text>
</comment>
<comment type="subcellular location">
    <subcellularLocation>
        <location>Membrane</location>
        <topology>Multi-pass membrane protein</topology>
    </subcellularLocation>
    <subcellularLocation>
        <location evidence="1">Cell projection</location>
        <location evidence="1">Cilium membrane</location>
    </subcellularLocation>
    <text evidence="1">In airway epithelial cells, localizes to motile cilia.</text>
</comment>
<comment type="miscellaneous">
    <text>Most taste cells may be activated by a limited number of bitter compounds; individual taste cells can discriminate among bitter stimuli.</text>
</comment>
<comment type="similarity">
    <text evidence="3">Belongs to the G-protein coupled receptor T2R family.</text>
</comment>
<feature type="chain" id="PRO_0000082305" description="Taste receptor type 2 member 43">
    <location>
        <begin position="1"/>
        <end position="309"/>
    </location>
</feature>
<feature type="topological domain" description="Extracellular" evidence="2">
    <location>
        <position position="1"/>
    </location>
</feature>
<feature type="transmembrane region" description="Helical; Name=1" evidence="2">
    <location>
        <begin position="2"/>
        <end position="22"/>
    </location>
</feature>
<feature type="topological domain" description="Cytoplasmic" evidence="2">
    <location>
        <begin position="23"/>
        <end position="46"/>
    </location>
</feature>
<feature type="transmembrane region" description="Helical; Name=2" evidence="2">
    <location>
        <begin position="47"/>
        <end position="67"/>
    </location>
</feature>
<feature type="topological domain" description="Extracellular" evidence="2">
    <location>
        <begin position="68"/>
        <end position="86"/>
    </location>
</feature>
<feature type="transmembrane region" description="Helical; Name=3" evidence="2">
    <location>
        <begin position="87"/>
        <end position="107"/>
    </location>
</feature>
<feature type="topological domain" description="Cytoplasmic" evidence="2">
    <location>
        <begin position="108"/>
        <end position="126"/>
    </location>
</feature>
<feature type="transmembrane region" description="Helical; Name=4" evidence="2">
    <location>
        <begin position="127"/>
        <end position="147"/>
    </location>
</feature>
<feature type="topological domain" description="Extracellular" evidence="2">
    <location>
        <begin position="148"/>
        <end position="178"/>
    </location>
</feature>
<feature type="transmembrane region" description="Helical; Name=5" evidence="2">
    <location>
        <begin position="179"/>
        <end position="199"/>
    </location>
</feature>
<feature type="topological domain" description="Cytoplasmic" evidence="2">
    <location>
        <begin position="200"/>
        <end position="229"/>
    </location>
</feature>
<feature type="transmembrane region" description="Helical; Name=6" evidence="2">
    <location>
        <begin position="230"/>
        <end position="250"/>
    </location>
</feature>
<feature type="topological domain" description="Extracellular" evidence="2">
    <location>
        <begin position="251"/>
        <end position="259"/>
    </location>
</feature>
<feature type="transmembrane region" description="Helical; Name=7" evidence="2">
    <location>
        <begin position="260"/>
        <end position="280"/>
    </location>
</feature>
<feature type="topological domain" description="Cytoplasmic" evidence="2">
    <location>
        <begin position="281"/>
        <end position="309"/>
    </location>
</feature>
<feature type="glycosylation site" description="N-linked (GlcNAc...) asparagine" evidence="2">
    <location>
        <position position="161"/>
    </location>
</feature>
<feature type="glycosylation site" description="N-linked (GlcNAc...) asparagine" evidence="2">
    <location>
        <position position="176"/>
    </location>
</feature>